<evidence type="ECO:0000255" key="1"/>
<proteinExistence type="inferred from homology"/>
<protein>
    <recommendedName>
        <fullName>SPbeta prophage-derived uncharacterized protein YoqM</fullName>
    </recommendedName>
</protein>
<reference key="1">
    <citation type="journal article" date="1997" name="Nature">
        <title>The complete genome sequence of the Gram-positive bacterium Bacillus subtilis.</title>
        <authorList>
            <person name="Kunst F."/>
            <person name="Ogasawara N."/>
            <person name="Moszer I."/>
            <person name="Albertini A.M."/>
            <person name="Alloni G."/>
            <person name="Azevedo V."/>
            <person name="Bertero M.G."/>
            <person name="Bessieres P."/>
            <person name="Bolotin A."/>
            <person name="Borchert S."/>
            <person name="Borriss R."/>
            <person name="Boursier L."/>
            <person name="Brans A."/>
            <person name="Braun M."/>
            <person name="Brignell S.C."/>
            <person name="Bron S."/>
            <person name="Brouillet S."/>
            <person name="Bruschi C.V."/>
            <person name="Caldwell B."/>
            <person name="Capuano V."/>
            <person name="Carter N.M."/>
            <person name="Choi S.-K."/>
            <person name="Codani J.-J."/>
            <person name="Connerton I.F."/>
            <person name="Cummings N.J."/>
            <person name="Daniel R.A."/>
            <person name="Denizot F."/>
            <person name="Devine K.M."/>
            <person name="Duesterhoeft A."/>
            <person name="Ehrlich S.D."/>
            <person name="Emmerson P.T."/>
            <person name="Entian K.-D."/>
            <person name="Errington J."/>
            <person name="Fabret C."/>
            <person name="Ferrari E."/>
            <person name="Foulger D."/>
            <person name="Fritz C."/>
            <person name="Fujita M."/>
            <person name="Fujita Y."/>
            <person name="Fuma S."/>
            <person name="Galizzi A."/>
            <person name="Galleron N."/>
            <person name="Ghim S.-Y."/>
            <person name="Glaser P."/>
            <person name="Goffeau A."/>
            <person name="Golightly E.J."/>
            <person name="Grandi G."/>
            <person name="Guiseppi G."/>
            <person name="Guy B.J."/>
            <person name="Haga K."/>
            <person name="Haiech J."/>
            <person name="Harwood C.R."/>
            <person name="Henaut A."/>
            <person name="Hilbert H."/>
            <person name="Holsappel S."/>
            <person name="Hosono S."/>
            <person name="Hullo M.-F."/>
            <person name="Itaya M."/>
            <person name="Jones L.-M."/>
            <person name="Joris B."/>
            <person name="Karamata D."/>
            <person name="Kasahara Y."/>
            <person name="Klaerr-Blanchard M."/>
            <person name="Klein C."/>
            <person name="Kobayashi Y."/>
            <person name="Koetter P."/>
            <person name="Koningstein G."/>
            <person name="Krogh S."/>
            <person name="Kumano M."/>
            <person name="Kurita K."/>
            <person name="Lapidus A."/>
            <person name="Lardinois S."/>
            <person name="Lauber J."/>
            <person name="Lazarevic V."/>
            <person name="Lee S.-M."/>
            <person name="Levine A."/>
            <person name="Liu H."/>
            <person name="Masuda S."/>
            <person name="Mauel C."/>
            <person name="Medigue C."/>
            <person name="Medina N."/>
            <person name="Mellado R.P."/>
            <person name="Mizuno M."/>
            <person name="Moestl D."/>
            <person name="Nakai S."/>
            <person name="Noback M."/>
            <person name="Noone D."/>
            <person name="O'Reilly M."/>
            <person name="Ogawa K."/>
            <person name="Ogiwara A."/>
            <person name="Oudega B."/>
            <person name="Park S.-H."/>
            <person name="Parro V."/>
            <person name="Pohl T.M."/>
            <person name="Portetelle D."/>
            <person name="Porwollik S."/>
            <person name="Prescott A.M."/>
            <person name="Presecan E."/>
            <person name="Pujic P."/>
            <person name="Purnelle B."/>
            <person name="Rapoport G."/>
            <person name="Rey M."/>
            <person name="Reynolds S."/>
            <person name="Rieger M."/>
            <person name="Rivolta C."/>
            <person name="Rocha E."/>
            <person name="Roche B."/>
            <person name="Rose M."/>
            <person name="Sadaie Y."/>
            <person name="Sato T."/>
            <person name="Scanlan E."/>
            <person name="Schleich S."/>
            <person name="Schroeter R."/>
            <person name="Scoffone F."/>
            <person name="Sekiguchi J."/>
            <person name="Sekowska A."/>
            <person name="Seror S.J."/>
            <person name="Serror P."/>
            <person name="Shin B.-S."/>
            <person name="Soldo B."/>
            <person name="Sorokin A."/>
            <person name="Tacconi E."/>
            <person name="Takagi T."/>
            <person name="Takahashi H."/>
            <person name="Takemaru K."/>
            <person name="Takeuchi M."/>
            <person name="Tamakoshi A."/>
            <person name="Tanaka T."/>
            <person name="Terpstra P."/>
            <person name="Tognoni A."/>
            <person name="Tosato V."/>
            <person name="Uchiyama S."/>
            <person name="Vandenbol M."/>
            <person name="Vannier F."/>
            <person name="Vassarotti A."/>
            <person name="Viari A."/>
            <person name="Wambutt R."/>
            <person name="Wedler E."/>
            <person name="Wedler H."/>
            <person name="Weitzenegger T."/>
            <person name="Winters P."/>
            <person name="Wipat A."/>
            <person name="Yamamoto H."/>
            <person name="Yamane K."/>
            <person name="Yasumoto K."/>
            <person name="Yata K."/>
            <person name="Yoshida K."/>
            <person name="Yoshikawa H.-F."/>
            <person name="Zumstein E."/>
            <person name="Yoshikawa H."/>
            <person name="Danchin A."/>
        </authorList>
    </citation>
    <scope>NUCLEOTIDE SEQUENCE [LARGE SCALE GENOMIC DNA]</scope>
    <source>
        <strain>168</strain>
    </source>
</reference>
<sequence>MKLRKVLTGSVLSLGLLVSASPAFATSPSAMVKENNIVQDEISVKELHTKYIYHHNINDFKNIEKDENGRNWYLKGIEYKDGWYVGKYQANY</sequence>
<feature type="signal peptide" evidence="1">
    <location>
        <begin position="1"/>
        <end position="25"/>
    </location>
</feature>
<feature type="chain" id="PRO_0000360470" description="SPbeta prophage-derived uncharacterized protein YoqM">
    <location>
        <begin position="26"/>
        <end position="92"/>
    </location>
</feature>
<organism>
    <name type="scientific">Bacillus subtilis (strain 168)</name>
    <dbReference type="NCBI Taxonomy" id="224308"/>
    <lineage>
        <taxon>Bacteria</taxon>
        <taxon>Bacillati</taxon>
        <taxon>Bacillota</taxon>
        <taxon>Bacilli</taxon>
        <taxon>Bacillales</taxon>
        <taxon>Bacillaceae</taxon>
        <taxon>Bacillus</taxon>
    </lineage>
</organism>
<gene>
    <name type="primary">yoqM</name>
    <name type="ordered locus">BSU20580</name>
</gene>
<accession>O31925</accession>
<name>YOQM_BACSU</name>
<dbReference type="EMBL" id="AL009126">
    <property type="protein sequence ID" value="CAB13950.1"/>
    <property type="molecule type" value="Genomic_DNA"/>
</dbReference>
<dbReference type="RefSeq" id="NP_389940.1">
    <property type="nucleotide sequence ID" value="NC_000964.3"/>
</dbReference>
<dbReference type="RefSeq" id="WP_009967493.1">
    <property type="nucleotide sequence ID" value="NZ_OZ025638.1"/>
</dbReference>
<dbReference type="FunCoup" id="O31925">
    <property type="interactions" value="39"/>
</dbReference>
<dbReference type="STRING" id="224308.BSU20580"/>
<dbReference type="PaxDb" id="224308-BSU20580"/>
<dbReference type="DNASU" id="939973"/>
<dbReference type="EnsemblBacteria" id="CAB13950">
    <property type="protein sequence ID" value="CAB13950"/>
    <property type="gene ID" value="BSU_20580"/>
</dbReference>
<dbReference type="GeneID" id="939973"/>
<dbReference type="KEGG" id="bsu:BSU20580"/>
<dbReference type="PATRIC" id="fig|224308.179.peg.2248"/>
<dbReference type="eggNOG" id="ENOG5030ERS">
    <property type="taxonomic scope" value="Bacteria"/>
</dbReference>
<dbReference type="InParanoid" id="O31925"/>
<dbReference type="OrthoDB" id="2936422at2"/>
<dbReference type="BioCyc" id="BSUB:BSU20580-MONOMER"/>
<dbReference type="Proteomes" id="UP000001570">
    <property type="component" value="Chromosome"/>
</dbReference>
<keyword id="KW-1185">Reference proteome</keyword>
<keyword id="KW-0732">Signal</keyword>